<comment type="function">
    <text evidence="1">ppGpp hydrolyzing enzyme involved in starvation response.</text>
</comment>
<comment type="catalytic activity">
    <reaction>
        <text>guanosine 3',5'-bis(diphosphate) + H2O = GDP + diphosphate + H(+)</text>
        <dbReference type="Rhea" id="RHEA:14253"/>
        <dbReference type="ChEBI" id="CHEBI:15377"/>
        <dbReference type="ChEBI" id="CHEBI:15378"/>
        <dbReference type="ChEBI" id="CHEBI:33019"/>
        <dbReference type="ChEBI" id="CHEBI:58189"/>
        <dbReference type="ChEBI" id="CHEBI:77828"/>
        <dbReference type="EC" id="3.1.7.2"/>
    </reaction>
</comment>
<comment type="cofactor">
    <cofactor evidence="1">
        <name>Mn(2+)</name>
        <dbReference type="ChEBI" id="CHEBI:29035"/>
    </cofactor>
</comment>
<comment type="similarity">
    <text evidence="4">Belongs to the MESH1 family.</text>
</comment>
<proteinExistence type="evidence at protein level"/>
<protein>
    <recommendedName>
        <fullName>Guanosine-3',5'-bis(diphosphate) 3'-pyrophosphohydrolase MESH1</fullName>
        <ecNumber>3.1.7.2</ecNumber>
    </recommendedName>
    <alternativeName>
        <fullName>HD domain-containing protein 3</fullName>
    </alternativeName>
    <alternativeName>
        <fullName>Metazoan SpoT homolog 1</fullName>
        <shortName>MESH1</shortName>
    </alternativeName>
    <alternativeName>
        <fullName>Penta-phosphate guanosine-3'-pyrophosphohydrolase</fullName>
        <shortName>(ppGpp)ase</shortName>
    </alternativeName>
</protein>
<dbReference type="EC" id="3.1.7.2"/>
<dbReference type="EMBL" id="AK004078">
    <property type="protein sequence ID" value="BAB23158.1"/>
    <property type="molecule type" value="mRNA"/>
</dbReference>
<dbReference type="EMBL" id="BC038310">
    <property type="protein sequence ID" value="AAH38310.1"/>
    <property type="molecule type" value="mRNA"/>
</dbReference>
<dbReference type="CCDS" id="CCDS21396.1"/>
<dbReference type="RefSeq" id="NP_081088.1">
    <property type="nucleotide sequence ID" value="NM_026812.3"/>
</dbReference>
<dbReference type="SMR" id="Q9D114"/>
<dbReference type="BioGRID" id="212997">
    <property type="interactions" value="2"/>
</dbReference>
<dbReference type="FunCoup" id="Q9D114">
    <property type="interactions" value="159"/>
</dbReference>
<dbReference type="STRING" id="10090.ENSMUSP00000032747"/>
<dbReference type="iPTMnet" id="Q9D114"/>
<dbReference type="PhosphoSitePlus" id="Q9D114"/>
<dbReference type="PaxDb" id="10090-ENSMUSP00000032747"/>
<dbReference type="PeptideAtlas" id="Q9D114"/>
<dbReference type="ProteomicsDB" id="295929"/>
<dbReference type="Pumba" id="Q9D114"/>
<dbReference type="Antibodypedia" id="43848">
    <property type="antibodies" value="117 antibodies from 20 providers"/>
</dbReference>
<dbReference type="DNASU" id="68695"/>
<dbReference type="Ensembl" id="ENSMUST00000032747.7">
    <property type="protein sequence ID" value="ENSMUSP00000032747.6"/>
    <property type="gene ID" value="ENSMUSG00000030532.7"/>
</dbReference>
<dbReference type="GeneID" id="68695"/>
<dbReference type="KEGG" id="mmu:68695"/>
<dbReference type="UCSC" id="uc009ian.1">
    <property type="organism name" value="mouse"/>
</dbReference>
<dbReference type="AGR" id="MGI:1915945"/>
<dbReference type="CTD" id="374659"/>
<dbReference type="MGI" id="MGI:1915945">
    <property type="gene designation" value="Hddc3"/>
</dbReference>
<dbReference type="VEuPathDB" id="HostDB:ENSMUSG00000030532"/>
<dbReference type="eggNOG" id="KOG1157">
    <property type="taxonomic scope" value="Eukaryota"/>
</dbReference>
<dbReference type="GeneTree" id="ENSGT00390000011608"/>
<dbReference type="HOGENOM" id="CLU_084517_1_0_1"/>
<dbReference type="InParanoid" id="Q9D114"/>
<dbReference type="OMA" id="PPWRERK"/>
<dbReference type="OrthoDB" id="430679at2759"/>
<dbReference type="PhylomeDB" id="Q9D114"/>
<dbReference type="TreeFam" id="TF313524"/>
<dbReference type="BioGRID-ORCS" id="68695">
    <property type="hits" value="3 hits in 76 CRISPR screens"/>
</dbReference>
<dbReference type="PRO" id="PR:Q9D114"/>
<dbReference type="Proteomes" id="UP000000589">
    <property type="component" value="Chromosome 7"/>
</dbReference>
<dbReference type="RNAct" id="Q9D114">
    <property type="molecule type" value="protein"/>
</dbReference>
<dbReference type="Bgee" id="ENSMUSG00000030532">
    <property type="expression patterns" value="Expressed in floor plate of midbrain and 221 other cell types or tissues"/>
</dbReference>
<dbReference type="ExpressionAtlas" id="Q9D114">
    <property type="expression patterns" value="baseline and differential"/>
</dbReference>
<dbReference type="GO" id="GO:0008893">
    <property type="term" value="F:guanosine-3',5'-bis(diphosphate) 3'-diphosphatase activity"/>
    <property type="evidence" value="ECO:0007669"/>
    <property type="project" value="UniProtKB-EC"/>
</dbReference>
<dbReference type="GO" id="GO:0046872">
    <property type="term" value="F:metal ion binding"/>
    <property type="evidence" value="ECO:0007669"/>
    <property type="project" value="UniProtKB-KW"/>
</dbReference>
<dbReference type="CDD" id="cd00077">
    <property type="entry name" value="HDc"/>
    <property type="match status" value="1"/>
</dbReference>
<dbReference type="FunFam" id="1.10.3210.10:FF:000012">
    <property type="entry name" value="HD domain containing 3"/>
    <property type="match status" value="1"/>
</dbReference>
<dbReference type="Gene3D" id="1.10.3210.10">
    <property type="entry name" value="Hypothetical protein af1432"/>
    <property type="match status" value="1"/>
</dbReference>
<dbReference type="InterPro" id="IPR003607">
    <property type="entry name" value="HD/PDEase_dom"/>
</dbReference>
<dbReference type="InterPro" id="IPR006674">
    <property type="entry name" value="HD_domain"/>
</dbReference>
<dbReference type="InterPro" id="IPR052194">
    <property type="entry name" value="MESH1"/>
</dbReference>
<dbReference type="PANTHER" id="PTHR46246">
    <property type="entry name" value="GUANOSINE-3',5'-BIS(DIPHOSPHATE) 3'-PYROPHOSPHOHYDROLASE MESH1"/>
    <property type="match status" value="1"/>
</dbReference>
<dbReference type="PANTHER" id="PTHR46246:SF1">
    <property type="entry name" value="GUANOSINE-3',5'-BIS(DIPHOSPHATE) 3'-PYROPHOSPHOHYDROLASE MESH1"/>
    <property type="match status" value="1"/>
</dbReference>
<dbReference type="Pfam" id="PF13328">
    <property type="entry name" value="HD_4"/>
    <property type="match status" value="1"/>
</dbReference>
<dbReference type="SMART" id="SM00471">
    <property type="entry name" value="HDc"/>
    <property type="match status" value="1"/>
</dbReference>
<dbReference type="SUPFAM" id="SSF109604">
    <property type="entry name" value="HD-domain/PDEase-like"/>
    <property type="match status" value="1"/>
</dbReference>
<dbReference type="PROSITE" id="PS51831">
    <property type="entry name" value="HD"/>
    <property type="match status" value="1"/>
</dbReference>
<name>MESH1_MOUSE</name>
<reference key="1">
    <citation type="journal article" date="2005" name="Science">
        <title>The transcriptional landscape of the mammalian genome.</title>
        <authorList>
            <person name="Carninci P."/>
            <person name="Kasukawa T."/>
            <person name="Katayama S."/>
            <person name="Gough J."/>
            <person name="Frith M.C."/>
            <person name="Maeda N."/>
            <person name="Oyama R."/>
            <person name="Ravasi T."/>
            <person name="Lenhard B."/>
            <person name="Wells C."/>
            <person name="Kodzius R."/>
            <person name="Shimokawa K."/>
            <person name="Bajic V.B."/>
            <person name="Brenner S.E."/>
            <person name="Batalov S."/>
            <person name="Forrest A.R."/>
            <person name="Zavolan M."/>
            <person name="Davis M.J."/>
            <person name="Wilming L.G."/>
            <person name="Aidinis V."/>
            <person name="Allen J.E."/>
            <person name="Ambesi-Impiombato A."/>
            <person name="Apweiler R."/>
            <person name="Aturaliya R.N."/>
            <person name="Bailey T.L."/>
            <person name="Bansal M."/>
            <person name="Baxter L."/>
            <person name="Beisel K.W."/>
            <person name="Bersano T."/>
            <person name="Bono H."/>
            <person name="Chalk A.M."/>
            <person name="Chiu K.P."/>
            <person name="Choudhary V."/>
            <person name="Christoffels A."/>
            <person name="Clutterbuck D.R."/>
            <person name="Crowe M.L."/>
            <person name="Dalla E."/>
            <person name="Dalrymple B.P."/>
            <person name="de Bono B."/>
            <person name="Della Gatta G."/>
            <person name="di Bernardo D."/>
            <person name="Down T."/>
            <person name="Engstrom P."/>
            <person name="Fagiolini M."/>
            <person name="Faulkner G."/>
            <person name="Fletcher C.F."/>
            <person name="Fukushima T."/>
            <person name="Furuno M."/>
            <person name="Futaki S."/>
            <person name="Gariboldi M."/>
            <person name="Georgii-Hemming P."/>
            <person name="Gingeras T.R."/>
            <person name="Gojobori T."/>
            <person name="Green R.E."/>
            <person name="Gustincich S."/>
            <person name="Harbers M."/>
            <person name="Hayashi Y."/>
            <person name="Hensch T.K."/>
            <person name="Hirokawa N."/>
            <person name="Hill D."/>
            <person name="Huminiecki L."/>
            <person name="Iacono M."/>
            <person name="Ikeo K."/>
            <person name="Iwama A."/>
            <person name="Ishikawa T."/>
            <person name="Jakt M."/>
            <person name="Kanapin A."/>
            <person name="Katoh M."/>
            <person name="Kawasawa Y."/>
            <person name="Kelso J."/>
            <person name="Kitamura H."/>
            <person name="Kitano H."/>
            <person name="Kollias G."/>
            <person name="Krishnan S.P."/>
            <person name="Kruger A."/>
            <person name="Kummerfeld S.K."/>
            <person name="Kurochkin I.V."/>
            <person name="Lareau L.F."/>
            <person name="Lazarevic D."/>
            <person name="Lipovich L."/>
            <person name="Liu J."/>
            <person name="Liuni S."/>
            <person name="McWilliam S."/>
            <person name="Madan Babu M."/>
            <person name="Madera M."/>
            <person name="Marchionni L."/>
            <person name="Matsuda H."/>
            <person name="Matsuzawa S."/>
            <person name="Miki H."/>
            <person name="Mignone F."/>
            <person name="Miyake S."/>
            <person name="Morris K."/>
            <person name="Mottagui-Tabar S."/>
            <person name="Mulder N."/>
            <person name="Nakano N."/>
            <person name="Nakauchi H."/>
            <person name="Ng P."/>
            <person name="Nilsson R."/>
            <person name="Nishiguchi S."/>
            <person name="Nishikawa S."/>
            <person name="Nori F."/>
            <person name="Ohara O."/>
            <person name="Okazaki Y."/>
            <person name="Orlando V."/>
            <person name="Pang K.C."/>
            <person name="Pavan W.J."/>
            <person name="Pavesi G."/>
            <person name="Pesole G."/>
            <person name="Petrovsky N."/>
            <person name="Piazza S."/>
            <person name="Reed J."/>
            <person name="Reid J.F."/>
            <person name="Ring B.Z."/>
            <person name="Ringwald M."/>
            <person name="Rost B."/>
            <person name="Ruan Y."/>
            <person name="Salzberg S.L."/>
            <person name="Sandelin A."/>
            <person name="Schneider C."/>
            <person name="Schoenbach C."/>
            <person name="Sekiguchi K."/>
            <person name="Semple C.A."/>
            <person name="Seno S."/>
            <person name="Sessa L."/>
            <person name="Sheng Y."/>
            <person name="Shibata Y."/>
            <person name="Shimada H."/>
            <person name="Shimada K."/>
            <person name="Silva D."/>
            <person name="Sinclair B."/>
            <person name="Sperling S."/>
            <person name="Stupka E."/>
            <person name="Sugiura K."/>
            <person name="Sultana R."/>
            <person name="Takenaka Y."/>
            <person name="Taki K."/>
            <person name="Tammoja K."/>
            <person name="Tan S.L."/>
            <person name="Tang S."/>
            <person name="Taylor M.S."/>
            <person name="Tegner J."/>
            <person name="Teichmann S.A."/>
            <person name="Ueda H.R."/>
            <person name="van Nimwegen E."/>
            <person name="Verardo R."/>
            <person name="Wei C.L."/>
            <person name="Yagi K."/>
            <person name="Yamanishi H."/>
            <person name="Zabarovsky E."/>
            <person name="Zhu S."/>
            <person name="Zimmer A."/>
            <person name="Hide W."/>
            <person name="Bult C."/>
            <person name="Grimmond S.M."/>
            <person name="Teasdale R.D."/>
            <person name="Liu E.T."/>
            <person name="Brusic V."/>
            <person name="Quackenbush J."/>
            <person name="Wahlestedt C."/>
            <person name="Mattick J.S."/>
            <person name="Hume D.A."/>
            <person name="Kai C."/>
            <person name="Sasaki D."/>
            <person name="Tomaru Y."/>
            <person name="Fukuda S."/>
            <person name="Kanamori-Katayama M."/>
            <person name="Suzuki M."/>
            <person name="Aoki J."/>
            <person name="Arakawa T."/>
            <person name="Iida J."/>
            <person name="Imamura K."/>
            <person name="Itoh M."/>
            <person name="Kato T."/>
            <person name="Kawaji H."/>
            <person name="Kawagashira N."/>
            <person name="Kawashima T."/>
            <person name="Kojima M."/>
            <person name="Kondo S."/>
            <person name="Konno H."/>
            <person name="Nakano K."/>
            <person name="Ninomiya N."/>
            <person name="Nishio T."/>
            <person name="Okada M."/>
            <person name="Plessy C."/>
            <person name="Shibata K."/>
            <person name="Shiraki T."/>
            <person name="Suzuki S."/>
            <person name="Tagami M."/>
            <person name="Waki K."/>
            <person name="Watahiki A."/>
            <person name="Okamura-Oho Y."/>
            <person name="Suzuki H."/>
            <person name="Kawai J."/>
            <person name="Hayashizaki Y."/>
        </authorList>
    </citation>
    <scope>NUCLEOTIDE SEQUENCE [LARGE SCALE MRNA]</scope>
    <source>
        <strain>C57BL/6J</strain>
        <tissue>Embryo</tissue>
    </source>
</reference>
<reference key="2">
    <citation type="journal article" date="2004" name="Genome Res.">
        <title>The status, quality, and expansion of the NIH full-length cDNA project: the Mammalian Gene Collection (MGC).</title>
        <authorList>
            <consortium name="The MGC Project Team"/>
        </authorList>
    </citation>
    <scope>NUCLEOTIDE SEQUENCE [LARGE SCALE MRNA]</scope>
    <source>
        <strain>Czech II</strain>
        <tissue>Lung</tissue>
    </source>
</reference>
<reference key="3">
    <citation type="journal article" date="2010" name="Cell">
        <title>A tissue-specific atlas of mouse protein phosphorylation and expression.</title>
        <authorList>
            <person name="Huttlin E.L."/>
            <person name="Jedrychowski M.P."/>
            <person name="Elias J.E."/>
            <person name="Goswami T."/>
            <person name="Rad R."/>
            <person name="Beausoleil S.A."/>
            <person name="Villen J."/>
            <person name="Haas W."/>
            <person name="Sowa M.E."/>
            <person name="Gygi S.P."/>
        </authorList>
    </citation>
    <scope>IDENTIFICATION BY MASS SPECTROMETRY [LARGE SCALE ANALYSIS]</scope>
    <source>
        <tissue>Brain</tissue>
        <tissue>Brown adipose tissue</tissue>
        <tissue>Heart</tissue>
        <tissue>Kidney</tissue>
        <tissue>Liver</tissue>
        <tissue>Pancreas</tissue>
        <tissue>Spleen</tissue>
        <tissue>Testis</tissue>
    </source>
</reference>
<evidence type="ECO:0000250" key="1"/>
<evidence type="ECO:0000250" key="2">
    <source>
        <dbReference type="UniProtKB" id="Q8N4P3"/>
    </source>
</evidence>
<evidence type="ECO:0000255" key="3">
    <source>
        <dbReference type="PROSITE-ProRule" id="PRU01175"/>
    </source>
</evidence>
<evidence type="ECO:0000305" key="4"/>
<sequence length="179" mass="20262">MGSEAAQLLEAADFAAHKHRQQRRKDPEGTPYINHPIGVARILTHEAGITDIVVLQAALLHDTVEDTDTTLDEVELHFGAQVRRLVEEVTDDKTLPKLERKRQQVEQAPHSSPGAKLVKLADKLYNLRDLNRCTPTGWSEHRVQEYFEWAAQVVKGLQGTNQQLEEALKQLFEERGLTL</sequence>
<feature type="initiator methionine" description="Removed" evidence="2">
    <location>
        <position position="1"/>
    </location>
</feature>
<feature type="chain" id="PRO_0000263111" description="Guanosine-3',5'-bis(diphosphate) 3'-pyrophosphohydrolase MESH1">
    <location>
        <begin position="2"/>
        <end position="179"/>
    </location>
</feature>
<feature type="domain" description="HD" evidence="3">
    <location>
        <begin position="32"/>
        <end position="127"/>
    </location>
</feature>
<feature type="active site" description="Nucleophile" evidence="1">
    <location>
        <position position="65"/>
    </location>
</feature>
<feature type="active site" description="Nucleophile" evidence="1">
    <location>
        <position position="66"/>
    </location>
</feature>
<feature type="binding site" evidence="1">
    <location>
        <position position="35"/>
    </location>
    <ligand>
        <name>Mn(2+)</name>
        <dbReference type="ChEBI" id="CHEBI:29035"/>
    </ligand>
</feature>
<feature type="binding site" evidence="1">
    <location>
        <position position="61"/>
    </location>
    <ligand>
        <name>Mn(2+)</name>
        <dbReference type="ChEBI" id="CHEBI:29035"/>
    </ligand>
</feature>
<feature type="binding site" evidence="1">
    <location>
        <position position="62"/>
    </location>
    <ligand>
        <name>Mn(2+)</name>
        <dbReference type="ChEBI" id="CHEBI:29035"/>
    </ligand>
</feature>
<feature type="binding site" evidence="1">
    <location>
        <position position="122"/>
    </location>
    <ligand>
        <name>Mn(2+)</name>
        <dbReference type="ChEBI" id="CHEBI:29035"/>
    </ligand>
</feature>
<feature type="modified residue" description="N-acetylglycine" evidence="2">
    <location>
        <position position="2"/>
    </location>
</feature>
<feature type="modified residue" description="N6-acetyllysine" evidence="2">
    <location>
        <position position="25"/>
    </location>
</feature>
<feature type="modified residue" description="N6-acetyllysine" evidence="2">
    <location>
        <position position="97"/>
    </location>
</feature>
<feature type="modified residue" description="N6-acetyllysine" evidence="2">
    <location>
        <position position="123"/>
    </location>
</feature>
<organism>
    <name type="scientific">Mus musculus</name>
    <name type="common">Mouse</name>
    <dbReference type="NCBI Taxonomy" id="10090"/>
    <lineage>
        <taxon>Eukaryota</taxon>
        <taxon>Metazoa</taxon>
        <taxon>Chordata</taxon>
        <taxon>Craniata</taxon>
        <taxon>Vertebrata</taxon>
        <taxon>Euteleostomi</taxon>
        <taxon>Mammalia</taxon>
        <taxon>Eutheria</taxon>
        <taxon>Euarchontoglires</taxon>
        <taxon>Glires</taxon>
        <taxon>Rodentia</taxon>
        <taxon>Myomorpha</taxon>
        <taxon>Muroidea</taxon>
        <taxon>Muridae</taxon>
        <taxon>Murinae</taxon>
        <taxon>Mus</taxon>
        <taxon>Mus</taxon>
    </lineage>
</organism>
<gene>
    <name type="primary">Hddc3</name>
    <name type="synonym">Mesh1</name>
</gene>
<keyword id="KW-0007">Acetylation</keyword>
<keyword id="KW-0378">Hydrolase</keyword>
<keyword id="KW-0464">Manganese</keyword>
<keyword id="KW-0479">Metal-binding</keyword>
<keyword id="KW-1185">Reference proteome</keyword>
<accession>Q9D114</accession>